<comment type="function">
    <text evidence="1">Component of the tagatose-1,6-bisphosphate aldolase GatYZ that is required for full activity and stability of the Y subunit. Could have a chaperone-like function for the proper and stable folding of GatY. When expressed alone, GatZ does not show any aldolase activity. Is involved in the catabolism of galactitol.</text>
</comment>
<comment type="pathway">
    <text evidence="1">Carbohydrate metabolism; D-tagatose 6-phosphate degradation; D-glyceraldehyde 3-phosphate and glycerone phosphate from D-tagatose 6-phosphate: step 2/2.</text>
</comment>
<comment type="subunit">
    <text evidence="1">Forms a complex with GatY.</text>
</comment>
<comment type="similarity">
    <text evidence="1">Belongs to the GatZ/KbaZ family. GatZ subfamily.</text>
</comment>
<accession>A6TEF8</accession>
<sequence>MKDIITRHKSGEHIGICSVCSAHPLVIEAALRFDLSTNNKVLIEATSNQVNQFGGYTGMQPADFRDFVYNIARTVGFPAERIILGGDHLGPNCWQDEPAAVAMEKSIDLIKAYVAAGFSKIHLDASMSCADDPVPLDPGVVAERAARLCQAAEETASDEQKRHLTYVIGTEVPVPGGEASTIGSVHVTRAQDAAATLETHEAAFRKLGLDAALERVIAIVVQPGVEFDHTQIIHYQPQEAKALSAWIESTPMVYEAHSTDYQTRQAYRALVRDHFAILKVGPALTFALREAIFALAQMENELIAPESRSRVMEVIDEVMLNEPGYWKKYYRPTWSQAMVDIHFSLSDRIRYYWPHPRIRQSVEKLIANLTDAKLPLGLISQYMPVQFERLSLNELNAEPHALILDKIQDVLRAYRYGCSSETA</sequence>
<organism>
    <name type="scientific">Klebsiella pneumoniae subsp. pneumoniae (strain ATCC 700721 / MGH 78578)</name>
    <dbReference type="NCBI Taxonomy" id="272620"/>
    <lineage>
        <taxon>Bacteria</taxon>
        <taxon>Pseudomonadati</taxon>
        <taxon>Pseudomonadota</taxon>
        <taxon>Gammaproteobacteria</taxon>
        <taxon>Enterobacterales</taxon>
        <taxon>Enterobacteriaceae</taxon>
        <taxon>Klebsiella/Raoultella group</taxon>
        <taxon>Klebsiella</taxon>
        <taxon>Klebsiella pneumoniae complex</taxon>
    </lineage>
</organism>
<protein>
    <recommendedName>
        <fullName evidence="1">D-tagatose-1,6-bisphosphate aldolase subunit GatZ</fullName>
    </recommendedName>
</protein>
<name>GATZ_KLEP7</name>
<proteinExistence type="inferred from homology"/>
<keyword id="KW-0298">Galactitol metabolism</keyword>
<evidence type="ECO:0000255" key="1">
    <source>
        <dbReference type="HAMAP-Rule" id="MF_01296"/>
    </source>
</evidence>
<feature type="chain" id="PRO_0000372506" description="D-tagatose-1,6-bisphosphate aldolase subunit GatZ">
    <location>
        <begin position="1"/>
        <end position="423"/>
    </location>
</feature>
<gene>
    <name evidence="1" type="primary">gatZ</name>
    <name type="ordered locus">KPN78578_35180</name>
    <name type="ORF">KPN_03547</name>
</gene>
<dbReference type="EMBL" id="CP000647">
    <property type="protein sequence ID" value="ABR78942.1"/>
    <property type="molecule type" value="Genomic_DNA"/>
</dbReference>
<dbReference type="RefSeq" id="WP_002918071.1">
    <property type="nucleotide sequence ID" value="NC_009648.1"/>
</dbReference>
<dbReference type="SMR" id="A6TEF8"/>
<dbReference type="STRING" id="272620.KPN_03547"/>
<dbReference type="PaxDb" id="272620-KPN_03547"/>
<dbReference type="EnsemblBacteria" id="ABR78942">
    <property type="protein sequence ID" value="ABR78942"/>
    <property type="gene ID" value="KPN_03547"/>
</dbReference>
<dbReference type="KEGG" id="kpn:KPN_03547"/>
<dbReference type="HOGENOM" id="CLU_053334_0_0_6"/>
<dbReference type="UniPathway" id="UPA00704">
    <property type="reaction ID" value="UER00716"/>
</dbReference>
<dbReference type="Proteomes" id="UP000000265">
    <property type="component" value="Chromosome"/>
</dbReference>
<dbReference type="GO" id="GO:0005886">
    <property type="term" value="C:plasma membrane"/>
    <property type="evidence" value="ECO:0007669"/>
    <property type="project" value="TreeGrafter"/>
</dbReference>
<dbReference type="GO" id="GO:2001059">
    <property type="term" value="P:D-tagatose 6-phosphate catabolic process"/>
    <property type="evidence" value="ECO:0007669"/>
    <property type="project" value="UniProtKB-UniRule"/>
</dbReference>
<dbReference type="GO" id="GO:0019402">
    <property type="term" value="P:galactitol metabolic process"/>
    <property type="evidence" value="ECO:0007669"/>
    <property type="project" value="UniProtKB-KW"/>
</dbReference>
<dbReference type="GO" id="GO:0009401">
    <property type="term" value="P:phosphoenolpyruvate-dependent sugar phosphotransferase system"/>
    <property type="evidence" value="ECO:0007669"/>
    <property type="project" value="TreeGrafter"/>
</dbReference>
<dbReference type="FunFam" id="3.20.20.70:FF:000141">
    <property type="entry name" value="D-tagatose-1,6-bisphosphate aldolase subunit GatZ"/>
    <property type="match status" value="1"/>
</dbReference>
<dbReference type="Gene3D" id="3.20.20.70">
    <property type="entry name" value="Aldolase class I"/>
    <property type="match status" value="1"/>
</dbReference>
<dbReference type="Gene3D" id="1.10.400.20">
    <property type="entry name" value="putative tagatose 6-phosphate kinase domain like"/>
    <property type="match status" value="1"/>
</dbReference>
<dbReference type="HAMAP" id="MF_01296">
    <property type="entry name" value="Tagatose_aldol_GatZ"/>
    <property type="match status" value="1"/>
</dbReference>
<dbReference type="InterPro" id="IPR013785">
    <property type="entry name" value="Aldolase_TIM"/>
</dbReference>
<dbReference type="InterPro" id="IPR012062">
    <property type="entry name" value="GatZ/KbaZ-like"/>
</dbReference>
<dbReference type="InterPro" id="IPR050303">
    <property type="entry name" value="GatZ_KbaZ_carbometab"/>
</dbReference>
<dbReference type="InterPro" id="IPR023436">
    <property type="entry name" value="TagBP_ald_GatZ"/>
</dbReference>
<dbReference type="NCBIfam" id="TIGR02810">
    <property type="entry name" value="agaZ_gatZ"/>
    <property type="match status" value="1"/>
</dbReference>
<dbReference type="NCBIfam" id="NF011626">
    <property type="entry name" value="PRK15052.1"/>
    <property type="match status" value="1"/>
</dbReference>
<dbReference type="PANTHER" id="PTHR32502:SF12">
    <property type="entry name" value="D-TAGATOSE-1,6-BISPHOSPHATE ALDOLASE SUBUNIT GATZ"/>
    <property type="match status" value="1"/>
</dbReference>
<dbReference type="PANTHER" id="PTHR32502">
    <property type="entry name" value="N-ACETYLGALACTOSAMINE PERMEASE II COMPONENT-RELATED"/>
    <property type="match status" value="1"/>
</dbReference>
<dbReference type="Pfam" id="PF08013">
    <property type="entry name" value="GatZ_KbaZ-like"/>
    <property type="match status" value="1"/>
</dbReference>
<dbReference type="PIRSF" id="PIRSF009264">
    <property type="entry name" value="TagBP_ald_AgaZ"/>
    <property type="match status" value="1"/>
</dbReference>
<dbReference type="SUPFAM" id="SSF51569">
    <property type="entry name" value="Aldolase"/>
    <property type="match status" value="1"/>
</dbReference>
<reference key="1">
    <citation type="submission" date="2006-09" db="EMBL/GenBank/DDBJ databases">
        <authorList>
            <consortium name="The Klebsiella pneumonia Genome Sequencing Project"/>
            <person name="McClelland M."/>
            <person name="Sanderson E.K."/>
            <person name="Spieth J."/>
            <person name="Clifton W.S."/>
            <person name="Latreille P."/>
            <person name="Sabo A."/>
            <person name="Pepin K."/>
            <person name="Bhonagiri V."/>
            <person name="Porwollik S."/>
            <person name="Ali J."/>
            <person name="Wilson R.K."/>
        </authorList>
    </citation>
    <scope>NUCLEOTIDE SEQUENCE [LARGE SCALE GENOMIC DNA]</scope>
    <source>
        <strain>ATCC 700721 / MGH 78578</strain>
    </source>
</reference>